<organism>
    <name type="scientific">Synechococcus elongatus (strain ATCC 33912 / PCC 7942 / FACHB-805)</name>
    <name type="common">Anacystis nidulans R2</name>
    <dbReference type="NCBI Taxonomy" id="1140"/>
    <lineage>
        <taxon>Bacteria</taxon>
        <taxon>Bacillati</taxon>
        <taxon>Cyanobacteriota</taxon>
        <taxon>Cyanophyceae</taxon>
        <taxon>Synechococcales</taxon>
        <taxon>Synechococcaceae</taxon>
        <taxon>Synechococcus</taxon>
    </lineage>
</organism>
<keyword id="KW-0169">Cobalamin biosynthesis</keyword>
<keyword id="KW-0315">Glutamine amidotransferase</keyword>
<keyword id="KW-1185">Reference proteome</keyword>
<comment type="function">
    <text evidence="1">Catalyzes amidations at positions B, D, E, and G on adenosylcobyrinic A,C-diamide. NH(2) groups are provided by glutamine, and one molecule of ATP is hydrogenolyzed for each amidation.</text>
</comment>
<comment type="pathway">
    <text evidence="1">Cofactor biosynthesis; adenosylcobalamin biosynthesis.</text>
</comment>
<comment type="similarity">
    <text evidence="1">Belongs to the CobB/CobQ family. CobQ subfamily.</text>
</comment>
<gene>
    <name evidence="1" type="primary">cobQ</name>
    <name type="ordered locus">Synpcc7942_0211</name>
</gene>
<name>COBQ_SYNE7</name>
<reference key="1">
    <citation type="submission" date="2005-08" db="EMBL/GenBank/DDBJ databases">
        <title>Complete sequence of chromosome 1 of Synechococcus elongatus PCC 7942.</title>
        <authorList>
            <consortium name="US DOE Joint Genome Institute"/>
            <person name="Copeland A."/>
            <person name="Lucas S."/>
            <person name="Lapidus A."/>
            <person name="Barry K."/>
            <person name="Detter J.C."/>
            <person name="Glavina T."/>
            <person name="Hammon N."/>
            <person name="Israni S."/>
            <person name="Pitluck S."/>
            <person name="Schmutz J."/>
            <person name="Larimer F."/>
            <person name="Land M."/>
            <person name="Kyrpides N."/>
            <person name="Lykidis A."/>
            <person name="Golden S."/>
            <person name="Richardson P."/>
        </authorList>
    </citation>
    <scope>NUCLEOTIDE SEQUENCE [LARGE SCALE GENOMIC DNA]</scope>
    <source>
        <strain>ATCC 33912 / PCC 7942 / FACHB-805</strain>
    </source>
</reference>
<accession>Q31RS6</accession>
<sequence>MPALMVVGCTSHAGKSLITAAICRLLRRQGWRVAPFKGQNMALNAYVTASGGEIGYAQAFQAWAAGVEPTIEMNPILLKPQGDMTSQVVLKGRAVGRTLAERYYQDYFEVGWEAICEALEQLQADYDWIVCEGAGSPAEINLKHRDLTNLRVAKHLQAPTLLLVDIDRGGSFAHLIGTLELLDPDERSLIRGFVFNKFRGRRELLQSGLDWLEERTGIPVLGVIPWIDRAFPSEDSLDLMERRRRKTQAEVTIAVIRLPRIANFTDFDPLESEPSVQVRYVGLQDELGYPDAVILPGSKTTISDLLDLQRSGLAQAIRDYAAAGGTVLGICGGFQMMGQHILDLEGTEGIEGQFEGLHLFPTQTWFTAEKTLRQRQTTARSPQAGLPITGYEIHQGQTRLDSDSEEFLPIFDDPKLGLCDRNGNLWGTYLHGIFDNGAWRRAWLNSLRHRRGLKALPTSIGHYQAQRDDLIDALADAVEPYLNLSPLLTAL</sequence>
<dbReference type="EMBL" id="CP000100">
    <property type="protein sequence ID" value="ABB56243.1"/>
    <property type="molecule type" value="Genomic_DNA"/>
</dbReference>
<dbReference type="RefSeq" id="WP_011377496.1">
    <property type="nucleotide sequence ID" value="NZ_JACJTX010000002.1"/>
</dbReference>
<dbReference type="SMR" id="Q31RS6"/>
<dbReference type="STRING" id="1140.Synpcc7942_0211"/>
<dbReference type="PaxDb" id="1140-Synpcc7942_0211"/>
<dbReference type="GeneID" id="72429024"/>
<dbReference type="KEGG" id="syf:Synpcc7942_0211"/>
<dbReference type="eggNOG" id="COG1492">
    <property type="taxonomic scope" value="Bacteria"/>
</dbReference>
<dbReference type="HOGENOM" id="CLU_019250_2_2_3"/>
<dbReference type="OrthoDB" id="9808302at2"/>
<dbReference type="BioCyc" id="SYNEL:SYNPCC7942_0211-MONOMER"/>
<dbReference type="UniPathway" id="UPA00148"/>
<dbReference type="Proteomes" id="UP000889800">
    <property type="component" value="Chromosome"/>
</dbReference>
<dbReference type="GO" id="GO:0015420">
    <property type="term" value="F:ABC-type vitamin B12 transporter activity"/>
    <property type="evidence" value="ECO:0007669"/>
    <property type="project" value="UniProtKB-UniRule"/>
</dbReference>
<dbReference type="GO" id="GO:0003824">
    <property type="term" value="F:catalytic activity"/>
    <property type="evidence" value="ECO:0007669"/>
    <property type="project" value="InterPro"/>
</dbReference>
<dbReference type="GO" id="GO:0009236">
    <property type="term" value="P:cobalamin biosynthetic process"/>
    <property type="evidence" value="ECO:0007669"/>
    <property type="project" value="UniProtKB-UniRule"/>
</dbReference>
<dbReference type="CDD" id="cd05389">
    <property type="entry name" value="CobQ_N"/>
    <property type="match status" value="1"/>
</dbReference>
<dbReference type="CDD" id="cd01750">
    <property type="entry name" value="GATase1_CobQ"/>
    <property type="match status" value="1"/>
</dbReference>
<dbReference type="Gene3D" id="3.40.50.880">
    <property type="match status" value="1"/>
</dbReference>
<dbReference type="Gene3D" id="3.40.50.300">
    <property type="entry name" value="P-loop containing nucleotide triphosphate hydrolases"/>
    <property type="match status" value="1"/>
</dbReference>
<dbReference type="HAMAP" id="MF_00028">
    <property type="entry name" value="CobQ"/>
    <property type="match status" value="1"/>
</dbReference>
<dbReference type="InterPro" id="IPR029062">
    <property type="entry name" value="Class_I_gatase-like"/>
</dbReference>
<dbReference type="InterPro" id="IPR002586">
    <property type="entry name" value="CobQ/CobB/MinD/ParA_Nub-bd_dom"/>
</dbReference>
<dbReference type="InterPro" id="IPR033949">
    <property type="entry name" value="CobQ_GATase1"/>
</dbReference>
<dbReference type="InterPro" id="IPR047045">
    <property type="entry name" value="CobQ_N"/>
</dbReference>
<dbReference type="InterPro" id="IPR004459">
    <property type="entry name" value="CobQ_synth"/>
</dbReference>
<dbReference type="InterPro" id="IPR011698">
    <property type="entry name" value="GATase_3"/>
</dbReference>
<dbReference type="InterPro" id="IPR027417">
    <property type="entry name" value="P-loop_NTPase"/>
</dbReference>
<dbReference type="NCBIfam" id="TIGR00313">
    <property type="entry name" value="cobQ"/>
    <property type="match status" value="1"/>
</dbReference>
<dbReference type="NCBIfam" id="NF001989">
    <property type="entry name" value="PRK00784.1"/>
    <property type="match status" value="1"/>
</dbReference>
<dbReference type="PANTHER" id="PTHR21343:SF1">
    <property type="entry name" value="COBYRIC ACID SYNTHASE"/>
    <property type="match status" value="1"/>
</dbReference>
<dbReference type="PANTHER" id="PTHR21343">
    <property type="entry name" value="DETHIOBIOTIN SYNTHETASE"/>
    <property type="match status" value="1"/>
</dbReference>
<dbReference type="Pfam" id="PF01656">
    <property type="entry name" value="CbiA"/>
    <property type="match status" value="1"/>
</dbReference>
<dbReference type="Pfam" id="PF07685">
    <property type="entry name" value="GATase_3"/>
    <property type="match status" value="1"/>
</dbReference>
<dbReference type="SUPFAM" id="SSF52317">
    <property type="entry name" value="Class I glutamine amidotransferase-like"/>
    <property type="match status" value="1"/>
</dbReference>
<dbReference type="SUPFAM" id="SSF52540">
    <property type="entry name" value="P-loop containing nucleoside triphosphate hydrolases"/>
    <property type="match status" value="1"/>
</dbReference>
<dbReference type="PROSITE" id="PS51274">
    <property type="entry name" value="GATASE_COBBQ"/>
    <property type="match status" value="1"/>
</dbReference>
<proteinExistence type="inferred from homology"/>
<evidence type="ECO:0000255" key="1">
    <source>
        <dbReference type="HAMAP-Rule" id="MF_00028"/>
    </source>
</evidence>
<feature type="chain" id="PRO_0000332395" description="Cobyric acid synthase">
    <location>
        <begin position="1"/>
        <end position="491"/>
    </location>
</feature>
<feature type="domain" description="GATase cobBQ-type" evidence="1">
    <location>
        <begin position="250"/>
        <end position="439"/>
    </location>
</feature>
<feature type="active site" description="Nucleophile" evidence="1">
    <location>
        <position position="331"/>
    </location>
</feature>
<feature type="active site" evidence="1">
    <location>
        <position position="431"/>
    </location>
</feature>
<protein>
    <recommendedName>
        <fullName evidence="1">Cobyric acid synthase</fullName>
    </recommendedName>
</protein>